<organism>
    <name type="scientific">Methanobrevibacter smithii (strain ATCC 35061 / DSM 861 / OCM 144 / PS)</name>
    <dbReference type="NCBI Taxonomy" id="420247"/>
    <lineage>
        <taxon>Archaea</taxon>
        <taxon>Methanobacteriati</taxon>
        <taxon>Methanobacteriota</taxon>
        <taxon>Methanomada group</taxon>
        <taxon>Methanobacteria</taxon>
        <taxon>Methanobacteriales</taxon>
        <taxon>Methanobacteriaceae</taxon>
        <taxon>Methanobrevibacter</taxon>
    </lineage>
</organism>
<accession>A5UL83</accession>
<gene>
    <name evidence="1" type="primary">rps3</name>
    <name type="ordered locus">Msm_0756</name>
</gene>
<dbReference type="EMBL" id="CP000678">
    <property type="protein sequence ID" value="ABQ86961.1"/>
    <property type="molecule type" value="Genomic_DNA"/>
</dbReference>
<dbReference type="RefSeq" id="WP_004033213.1">
    <property type="nucleotide sequence ID" value="NZ_CP117965.1"/>
</dbReference>
<dbReference type="SMR" id="A5UL83"/>
<dbReference type="STRING" id="420247.Msm_0756"/>
<dbReference type="EnsemblBacteria" id="ABQ86961">
    <property type="protein sequence ID" value="ABQ86961"/>
    <property type="gene ID" value="Msm_0756"/>
</dbReference>
<dbReference type="KEGG" id="msi:Msm_0756"/>
<dbReference type="PATRIC" id="fig|420247.28.peg.753"/>
<dbReference type="eggNOG" id="arCOG04097">
    <property type="taxonomic scope" value="Archaea"/>
</dbReference>
<dbReference type="HOGENOM" id="CLU_058591_1_1_2"/>
<dbReference type="Proteomes" id="UP000001992">
    <property type="component" value="Chromosome"/>
</dbReference>
<dbReference type="GO" id="GO:0022627">
    <property type="term" value="C:cytosolic small ribosomal subunit"/>
    <property type="evidence" value="ECO:0007669"/>
    <property type="project" value="TreeGrafter"/>
</dbReference>
<dbReference type="GO" id="GO:0019843">
    <property type="term" value="F:rRNA binding"/>
    <property type="evidence" value="ECO:0007669"/>
    <property type="project" value="UniProtKB-UniRule"/>
</dbReference>
<dbReference type="GO" id="GO:0003735">
    <property type="term" value="F:structural constituent of ribosome"/>
    <property type="evidence" value="ECO:0007669"/>
    <property type="project" value="InterPro"/>
</dbReference>
<dbReference type="GO" id="GO:0006412">
    <property type="term" value="P:translation"/>
    <property type="evidence" value="ECO:0007669"/>
    <property type="project" value="UniProtKB-UniRule"/>
</dbReference>
<dbReference type="CDD" id="cd02411">
    <property type="entry name" value="KH-II_30S_S3_arch"/>
    <property type="match status" value="1"/>
</dbReference>
<dbReference type="FunFam" id="3.30.300.20:FF:000001">
    <property type="entry name" value="30S ribosomal protein S3"/>
    <property type="match status" value="1"/>
</dbReference>
<dbReference type="Gene3D" id="3.30.300.20">
    <property type="match status" value="1"/>
</dbReference>
<dbReference type="Gene3D" id="3.30.1140.32">
    <property type="entry name" value="Ribosomal protein S3, C-terminal domain"/>
    <property type="match status" value="1"/>
</dbReference>
<dbReference type="HAMAP" id="MF_01309_A">
    <property type="entry name" value="Ribosomal_uS3_A"/>
    <property type="match status" value="1"/>
</dbReference>
<dbReference type="InterPro" id="IPR004087">
    <property type="entry name" value="KH_dom"/>
</dbReference>
<dbReference type="InterPro" id="IPR015946">
    <property type="entry name" value="KH_dom-like_a/b"/>
</dbReference>
<dbReference type="InterPro" id="IPR004044">
    <property type="entry name" value="KH_dom_type_2"/>
</dbReference>
<dbReference type="InterPro" id="IPR009019">
    <property type="entry name" value="KH_sf_prok-type"/>
</dbReference>
<dbReference type="InterPro" id="IPR036419">
    <property type="entry name" value="Ribosomal_S3_C_sf"/>
</dbReference>
<dbReference type="InterPro" id="IPR027488">
    <property type="entry name" value="Ribosomal_uS3_arc"/>
</dbReference>
<dbReference type="InterPro" id="IPR001351">
    <property type="entry name" value="Ribosomal_uS3_C"/>
</dbReference>
<dbReference type="InterPro" id="IPR005703">
    <property type="entry name" value="Ribosomal_uS3_euk/arc"/>
</dbReference>
<dbReference type="NCBIfam" id="NF003219">
    <property type="entry name" value="PRK04191.1"/>
    <property type="match status" value="1"/>
</dbReference>
<dbReference type="NCBIfam" id="TIGR01008">
    <property type="entry name" value="uS3_euk_arch"/>
    <property type="match status" value="1"/>
</dbReference>
<dbReference type="PANTHER" id="PTHR11760">
    <property type="entry name" value="30S/40S RIBOSOMAL PROTEIN S3"/>
    <property type="match status" value="1"/>
</dbReference>
<dbReference type="PANTHER" id="PTHR11760:SF32">
    <property type="entry name" value="SMALL RIBOSOMAL SUBUNIT PROTEIN US3"/>
    <property type="match status" value="1"/>
</dbReference>
<dbReference type="Pfam" id="PF07650">
    <property type="entry name" value="KH_2"/>
    <property type="match status" value="1"/>
</dbReference>
<dbReference type="Pfam" id="PF00189">
    <property type="entry name" value="Ribosomal_S3_C"/>
    <property type="match status" value="1"/>
</dbReference>
<dbReference type="SMART" id="SM00322">
    <property type="entry name" value="KH"/>
    <property type="match status" value="1"/>
</dbReference>
<dbReference type="SUPFAM" id="SSF54814">
    <property type="entry name" value="Prokaryotic type KH domain (KH-domain type II)"/>
    <property type="match status" value="1"/>
</dbReference>
<dbReference type="SUPFAM" id="SSF54821">
    <property type="entry name" value="Ribosomal protein S3 C-terminal domain"/>
    <property type="match status" value="1"/>
</dbReference>
<dbReference type="PROSITE" id="PS50823">
    <property type="entry name" value="KH_TYPE_2"/>
    <property type="match status" value="1"/>
</dbReference>
<sequence length="250" mass="27945">MIEKDFVTEGLKRTRIDEYLEKELERAGYGGMDVQITPLGTMVVVYAERPGMVIGRGGKNVRAITNTLKNDFGLDNPQIEVKEVSVPELNPKIMAYKIANMLQRGMHFRRVAYSTIRRIMGAGAQGVEVTISGKIRGSRSAVAKFVEGYIKKCGEPSIRLVEEGFATVQLKPGVLGIYVRIMPPETVLPDSVEILPPKMEIIEDDEVVEVEELDDSEEIVEEEIVEEVEDLDELEEIVEEESAEEAKEDS</sequence>
<feature type="chain" id="PRO_0000323313" description="Small ribosomal subunit protein uS3">
    <location>
        <begin position="1"/>
        <end position="250"/>
    </location>
</feature>
<feature type="domain" description="KH type-2" evidence="1">
    <location>
        <begin position="16"/>
        <end position="85"/>
    </location>
</feature>
<keyword id="KW-0687">Ribonucleoprotein</keyword>
<keyword id="KW-0689">Ribosomal protein</keyword>
<keyword id="KW-0694">RNA-binding</keyword>
<keyword id="KW-0699">rRNA-binding</keyword>
<reference key="1">
    <citation type="journal article" date="2007" name="Proc. Natl. Acad. Sci. U.S.A.">
        <title>Genomic and metabolic adaptations of Methanobrevibacter smithii to the human gut.</title>
        <authorList>
            <person name="Samuel B.S."/>
            <person name="Hansen E.E."/>
            <person name="Manchester J.K."/>
            <person name="Coutinho P.M."/>
            <person name="Henrissat B."/>
            <person name="Fulton R."/>
            <person name="Latreille P."/>
            <person name="Kim K."/>
            <person name="Wilson R.K."/>
            <person name="Gordon J.I."/>
        </authorList>
    </citation>
    <scope>NUCLEOTIDE SEQUENCE [LARGE SCALE GENOMIC DNA]</scope>
    <source>
        <strain>ATCC 35061 / DSM 861 / OCM 144 / PS</strain>
    </source>
</reference>
<comment type="function">
    <text evidence="1">Binds the lower part of the 30S subunit head.</text>
</comment>
<comment type="subunit">
    <text evidence="1">Part of the 30S ribosomal subunit.</text>
</comment>
<comment type="similarity">
    <text evidence="1">Belongs to the universal ribosomal protein uS3 family.</text>
</comment>
<protein>
    <recommendedName>
        <fullName evidence="1">Small ribosomal subunit protein uS3</fullName>
    </recommendedName>
    <alternativeName>
        <fullName evidence="2">30S ribosomal protein S3</fullName>
    </alternativeName>
</protein>
<proteinExistence type="inferred from homology"/>
<evidence type="ECO:0000255" key="1">
    <source>
        <dbReference type="HAMAP-Rule" id="MF_01309"/>
    </source>
</evidence>
<evidence type="ECO:0000305" key="2"/>
<name>RS3_METS3</name>